<evidence type="ECO:0000250" key="1"/>
<evidence type="ECO:0000255" key="2"/>
<evidence type="ECO:0000305" key="3"/>
<name>CYAA_ECOL6</name>
<gene>
    <name type="primary">cyaA</name>
    <name type="ordered locus">c4725</name>
</gene>
<accession>Q8FBP0</accession>
<sequence>MYLYIETLKQRLDAINQLRVDRALAAMGPAFQQVYSLLPTLLHYHHPLMPGYLDGNVPKGICLYTPDETQRHYLNELELYRGMSVQDPPKGELPITGVYTMGSTSSVGQSCSSDLDIWVCHQSWLDSEERQLLQRKCSLLESWAASLGVEVSFFLIDENRFRHNESGSLGGEDCGSTQHILLLDEFYRTAVRLAGKRILWNMVPCDEEEHYDDYVMTLYAQGVLTPNEWLDLGGLSSLSAEEYFGASLWQLYKSIDSPYKAVLKTLLLEAYSWEYPNPRLLAKDIKQRLHDGEIVSFGLDPYCMMLERVTEYLTAIEDFTRLDLVRRCFYLKVCEKLSRERACVGWRREVLSQLVKEWEWDDARLAMLDNRANWKIDQVREAHNELLDAMMQSYRNLIRFARRNNLSVSASPQDIGVLTRKLYAAFEALPGKVTLVNPQISPDLSEPNLTFIYVPPGRANRSGWYLYNRAPNIESIISHQPLEYNRYLNKLVAWAWFNGLLTSRTRLYIKGNGVVDLPKLQEMVADVSHHFPLRLPAPTPKALYSPCEIRHLAIIVNLEYDPTAAFRNQVVHFDFRKLDVFSFGENQNCLVGSVDLLYRNSWNEVRTLHFNGEQSMIEALKTILGKMHQDAAPPDSVEVFCYSQHLRGLIRTRVQQLVSECIELRLSSTRQETGRFKALRVSGQTWGLFFERLNVSVQKLENAIEFYGAISHNKLHGLSVQVETNHVKLPAVVDGFASEGIIQFFFEETQDENGFNIYILDESNRVEVYHHCEGSKEELVRDVSRFYSSSHDRFTYGSSFINFNLPQFYQIVKVDGREQVIPFRTKSIGNMPPANQEHDAPLLQQYFS</sequence>
<reference key="1">
    <citation type="journal article" date="2002" name="Proc. Natl. Acad. Sci. U.S.A.">
        <title>Extensive mosaic structure revealed by the complete genome sequence of uropathogenic Escherichia coli.</title>
        <authorList>
            <person name="Welch R.A."/>
            <person name="Burland V."/>
            <person name="Plunkett G. III"/>
            <person name="Redford P."/>
            <person name="Roesch P."/>
            <person name="Rasko D."/>
            <person name="Buckles E.L."/>
            <person name="Liou S.-R."/>
            <person name="Boutin A."/>
            <person name="Hackett J."/>
            <person name="Stroud D."/>
            <person name="Mayhew G.F."/>
            <person name="Rose D.J."/>
            <person name="Zhou S."/>
            <person name="Schwartz D.C."/>
            <person name="Perna N.T."/>
            <person name="Mobley H.L.T."/>
            <person name="Donnenberg M.S."/>
            <person name="Blattner F.R."/>
        </authorList>
    </citation>
    <scope>NUCLEOTIDE SEQUENCE [LARGE SCALE GENOMIC DNA]</scope>
    <source>
        <strain>CFT073 / ATCC 700928 / UPEC</strain>
    </source>
</reference>
<protein>
    <recommendedName>
        <fullName>Adenylate cyclase</fullName>
        <ecNumber>4.6.1.1</ecNumber>
    </recommendedName>
    <alternativeName>
        <fullName>ATP pyrophosphate-lyase</fullName>
    </alternativeName>
    <alternativeName>
        <fullName>Adenylyl cyclase</fullName>
    </alternativeName>
</protein>
<organism>
    <name type="scientific">Escherichia coli O6:H1 (strain CFT073 / ATCC 700928 / UPEC)</name>
    <dbReference type="NCBI Taxonomy" id="199310"/>
    <lineage>
        <taxon>Bacteria</taxon>
        <taxon>Pseudomonadati</taxon>
        <taxon>Pseudomonadota</taxon>
        <taxon>Gammaproteobacteria</taxon>
        <taxon>Enterobacterales</taxon>
        <taxon>Enterobacteriaceae</taxon>
        <taxon>Escherichia</taxon>
    </lineage>
</organism>
<proteinExistence type="inferred from homology"/>
<feature type="chain" id="PRO_0000195670" description="Adenylate cyclase">
    <location>
        <begin position="1"/>
        <end position="848"/>
    </location>
</feature>
<feature type="region of interest" description="Catalytic">
    <location>
        <begin position="1"/>
        <end position="535"/>
    </location>
</feature>
<feature type="region of interest" description="Regulatory">
    <location>
        <begin position="541"/>
        <end position="848"/>
    </location>
</feature>
<feature type="modified residue" description="Phosphohistidine; by CRR" evidence="2">
    <location>
        <position position="609"/>
    </location>
</feature>
<dbReference type="EC" id="4.6.1.1"/>
<dbReference type="EMBL" id="AE014075">
    <property type="protein sequence ID" value="AAN83158.1"/>
    <property type="molecule type" value="Genomic_DNA"/>
</dbReference>
<dbReference type="RefSeq" id="WP_000281692.1">
    <property type="nucleotide sequence ID" value="NZ_CP051263.1"/>
</dbReference>
<dbReference type="STRING" id="199310.c4725"/>
<dbReference type="KEGG" id="ecc:c4725"/>
<dbReference type="eggNOG" id="COG3072">
    <property type="taxonomic scope" value="Bacteria"/>
</dbReference>
<dbReference type="HOGENOM" id="CLU_013280_0_0_6"/>
<dbReference type="BioCyc" id="ECOL199310:C4725-MONOMER"/>
<dbReference type="Proteomes" id="UP000001410">
    <property type="component" value="Chromosome"/>
</dbReference>
<dbReference type="GO" id="GO:0005737">
    <property type="term" value="C:cytoplasm"/>
    <property type="evidence" value="ECO:0007669"/>
    <property type="project" value="UniProtKB-SubCell"/>
</dbReference>
<dbReference type="GO" id="GO:0004016">
    <property type="term" value="F:adenylate cyclase activity"/>
    <property type="evidence" value="ECO:0007669"/>
    <property type="project" value="UniProtKB-EC"/>
</dbReference>
<dbReference type="GO" id="GO:0005524">
    <property type="term" value="F:ATP binding"/>
    <property type="evidence" value="ECO:0007669"/>
    <property type="project" value="UniProtKB-KW"/>
</dbReference>
<dbReference type="GO" id="GO:0006171">
    <property type="term" value="P:cAMP biosynthetic process"/>
    <property type="evidence" value="ECO:0007669"/>
    <property type="project" value="UniProtKB-KW"/>
</dbReference>
<dbReference type="InterPro" id="IPR000274">
    <property type="entry name" value="Adenylate_cyclase_1"/>
</dbReference>
<dbReference type="InterPro" id="IPR024686">
    <property type="entry name" value="Adenylate_cyclase_1_CS"/>
</dbReference>
<dbReference type="InterPro" id="IPR024685">
    <property type="entry name" value="Adenylate_cyclase_1_N"/>
</dbReference>
<dbReference type="NCBIfam" id="NF006977">
    <property type="entry name" value="PRK09450.1-1"/>
    <property type="match status" value="1"/>
</dbReference>
<dbReference type="NCBIfam" id="NF006978">
    <property type="entry name" value="PRK09450.1-2"/>
    <property type="match status" value="1"/>
</dbReference>
<dbReference type="NCBIfam" id="NF006979">
    <property type="entry name" value="PRK09450.1-4"/>
    <property type="match status" value="1"/>
</dbReference>
<dbReference type="PANTHER" id="PTHR38760">
    <property type="entry name" value="ADENYLATE CYCLASE"/>
    <property type="match status" value="1"/>
</dbReference>
<dbReference type="PANTHER" id="PTHR38760:SF1">
    <property type="entry name" value="ADENYLATE CYCLASE"/>
    <property type="match status" value="1"/>
</dbReference>
<dbReference type="Pfam" id="PF12633">
    <property type="entry name" value="Adenyl_cycl_N"/>
    <property type="match status" value="1"/>
</dbReference>
<dbReference type="Pfam" id="PF01295">
    <property type="entry name" value="Adenylate_cycl"/>
    <property type="match status" value="1"/>
</dbReference>
<dbReference type="PIRSF" id="PIRSF001444">
    <property type="entry name" value="Adenylate_cycl"/>
    <property type="match status" value="1"/>
</dbReference>
<dbReference type="PROSITE" id="PS01092">
    <property type="entry name" value="ADENYLATE_CYCLASE_1_1"/>
    <property type="match status" value="1"/>
</dbReference>
<dbReference type="PROSITE" id="PS01093">
    <property type="entry name" value="ADENYLATE_CYCLASE_1_2"/>
    <property type="match status" value="1"/>
</dbReference>
<keyword id="KW-0067">ATP-binding</keyword>
<keyword id="KW-0115">cAMP biosynthesis</keyword>
<keyword id="KW-0963">Cytoplasm</keyword>
<keyword id="KW-0456">Lyase</keyword>
<keyword id="KW-0547">Nucleotide-binding</keyword>
<keyword id="KW-0597">Phosphoprotein</keyword>
<keyword id="KW-1185">Reference proteome</keyword>
<comment type="catalytic activity">
    <reaction>
        <text>ATP = 3',5'-cyclic AMP + diphosphate</text>
        <dbReference type="Rhea" id="RHEA:15389"/>
        <dbReference type="ChEBI" id="CHEBI:30616"/>
        <dbReference type="ChEBI" id="CHEBI:33019"/>
        <dbReference type="ChEBI" id="CHEBI:58165"/>
        <dbReference type="EC" id="4.6.1.1"/>
    </reaction>
</comment>
<comment type="subcellular location">
    <subcellularLocation>
        <location evidence="1">Cytoplasm</location>
    </subcellularLocation>
</comment>
<comment type="similarity">
    <text evidence="3">Belongs to the adenylyl cyclase class-1 family.</text>
</comment>